<comment type="function">
    <text evidence="1">Catalyzes the condensation of iminoaspartate with dihydroxyacetone phosphate to form quinolinate.</text>
</comment>
<comment type="catalytic activity">
    <reaction evidence="1">
        <text>iminosuccinate + dihydroxyacetone phosphate = quinolinate + phosphate + 2 H2O + H(+)</text>
        <dbReference type="Rhea" id="RHEA:25888"/>
        <dbReference type="ChEBI" id="CHEBI:15377"/>
        <dbReference type="ChEBI" id="CHEBI:15378"/>
        <dbReference type="ChEBI" id="CHEBI:29959"/>
        <dbReference type="ChEBI" id="CHEBI:43474"/>
        <dbReference type="ChEBI" id="CHEBI:57642"/>
        <dbReference type="ChEBI" id="CHEBI:77875"/>
        <dbReference type="EC" id="2.5.1.72"/>
    </reaction>
    <physiologicalReaction direction="left-to-right" evidence="1">
        <dbReference type="Rhea" id="RHEA:25889"/>
    </physiologicalReaction>
</comment>
<comment type="cofactor">
    <cofactor evidence="1">
        <name>[4Fe-4S] cluster</name>
        <dbReference type="ChEBI" id="CHEBI:49883"/>
    </cofactor>
    <text evidence="1">Binds 1 [4Fe-4S] cluster per subunit.</text>
</comment>
<comment type="pathway">
    <text evidence="1">Cofactor biosynthesis; NAD(+) biosynthesis; quinolinate from iminoaspartate: step 1/1.</text>
</comment>
<comment type="subcellular location">
    <subcellularLocation>
        <location evidence="1">Cytoplasm</location>
    </subcellularLocation>
</comment>
<comment type="similarity">
    <text evidence="1">Belongs to the quinolinate synthase family. Type 2 subfamily.</text>
</comment>
<feature type="chain" id="PRO_1000146811" description="Quinolinate synthase">
    <location>
        <begin position="1"/>
        <end position="303"/>
    </location>
</feature>
<feature type="binding site" evidence="1">
    <location>
        <position position="24"/>
    </location>
    <ligand>
        <name>iminosuccinate</name>
        <dbReference type="ChEBI" id="CHEBI:77875"/>
    </ligand>
</feature>
<feature type="binding site" evidence="1">
    <location>
        <position position="41"/>
    </location>
    <ligand>
        <name>iminosuccinate</name>
        <dbReference type="ChEBI" id="CHEBI:77875"/>
    </ligand>
</feature>
<feature type="binding site" evidence="1">
    <location>
        <position position="86"/>
    </location>
    <ligand>
        <name>[4Fe-4S] cluster</name>
        <dbReference type="ChEBI" id="CHEBI:49883"/>
    </ligand>
</feature>
<feature type="binding site" evidence="1">
    <location>
        <begin position="112"/>
        <end position="114"/>
    </location>
    <ligand>
        <name>iminosuccinate</name>
        <dbReference type="ChEBI" id="CHEBI:77875"/>
    </ligand>
</feature>
<feature type="binding site" evidence="1">
    <location>
        <position position="129"/>
    </location>
    <ligand>
        <name>iminosuccinate</name>
        <dbReference type="ChEBI" id="CHEBI:77875"/>
    </ligand>
</feature>
<feature type="binding site" evidence="1">
    <location>
        <position position="172"/>
    </location>
    <ligand>
        <name>[4Fe-4S] cluster</name>
        <dbReference type="ChEBI" id="CHEBI:49883"/>
    </ligand>
</feature>
<feature type="binding site" evidence="1">
    <location>
        <begin position="198"/>
        <end position="200"/>
    </location>
    <ligand>
        <name>iminosuccinate</name>
        <dbReference type="ChEBI" id="CHEBI:77875"/>
    </ligand>
</feature>
<feature type="binding site" evidence="1">
    <location>
        <position position="215"/>
    </location>
    <ligand>
        <name>iminosuccinate</name>
        <dbReference type="ChEBI" id="CHEBI:77875"/>
    </ligand>
</feature>
<feature type="binding site" evidence="1">
    <location>
        <position position="260"/>
    </location>
    <ligand>
        <name>[4Fe-4S] cluster</name>
        <dbReference type="ChEBI" id="CHEBI:49883"/>
    </ligand>
</feature>
<proteinExistence type="inferred from homology"/>
<protein>
    <recommendedName>
        <fullName evidence="1">Quinolinate synthase</fullName>
        <ecNumber evidence="1">2.5.1.72</ecNumber>
    </recommendedName>
</protein>
<gene>
    <name evidence="1" type="primary">nadA</name>
    <name type="ordered locus">CKR_0669</name>
</gene>
<dbReference type="EC" id="2.5.1.72" evidence="1"/>
<dbReference type="EMBL" id="AP009049">
    <property type="protein sequence ID" value="BAH05720.1"/>
    <property type="molecule type" value="Genomic_DNA"/>
</dbReference>
<dbReference type="RefSeq" id="WP_011989316.1">
    <property type="nucleotide sequence ID" value="NC_011837.1"/>
</dbReference>
<dbReference type="SMR" id="B9DZP5"/>
<dbReference type="KEGG" id="ckr:CKR_0669"/>
<dbReference type="HOGENOM" id="CLU_047382_0_0_9"/>
<dbReference type="UniPathway" id="UPA00253">
    <property type="reaction ID" value="UER00327"/>
</dbReference>
<dbReference type="Proteomes" id="UP000007969">
    <property type="component" value="Chromosome"/>
</dbReference>
<dbReference type="GO" id="GO:0005737">
    <property type="term" value="C:cytoplasm"/>
    <property type="evidence" value="ECO:0007669"/>
    <property type="project" value="UniProtKB-SubCell"/>
</dbReference>
<dbReference type="GO" id="GO:0051539">
    <property type="term" value="F:4 iron, 4 sulfur cluster binding"/>
    <property type="evidence" value="ECO:0007669"/>
    <property type="project" value="UniProtKB-KW"/>
</dbReference>
<dbReference type="GO" id="GO:0046872">
    <property type="term" value="F:metal ion binding"/>
    <property type="evidence" value="ECO:0007669"/>
    <property type="project" value="UniProtKB-KW"/>
</dbReference>
<dbReference type="GO" id="GO:0008987">
    <property type="term" value="F:quinolinate synthetase A activity"/>
    <property type="evidence" value="ECO:0007669"/>
    <property type="project" value="UniProtKB-UniRule"/>
</dbReference>
<dbReference type="GO" id="GO:0034628">
    <property type="term" value="P:'de novo' NAD biosynthetic process from L-aspartate"/>
    <property type="evidence" value="ECO:0007669"/>
    <property type="project" value="TreeGrafter"/>
</dbReference>
<dbReference type="FunFam" id="3.40.50.10800:FF:000001">
    <property type="entry name" value="Quinolinate synthase A"/>
    <property type="match status" value="1"/>
</dbReference>
<dbReference type="Gene3D" id="3.40.50.10800">
    <property type="entry name" value="NadA-like"/>
    <property type="match status" value="3"/>
</dbReference>
<dbReference type="HAMAP" id="MF_00568">
    <property type="entry name" value="NadA_type2"/>
    <property type="match status" value="1"/>
</dbReference>
<dbReference type="InterPro" id="IPR003473">
    <property type="entry name" value="NadA"/>
</dbReference>
<dbReference type="InterPro" id="IPR036094">
    <property type="entry name" value="NadA_sf"/>
</dbReference>
<dbReference type="InterPro" id="IPR023066">
    <property type="entry name" value="Quinolinate_synth_type2"/>
</dbReference>
<dbReference type="NCBIfam" id="TIGR00550">
    <property type="entry name" value="nadA"/>
    <property type="match status" value="1"/>
</dbReference>
<dbReference type="NCBIfam" id="NF006878">
    <property type="entry name" value="PRK09375.1-2"/>
    <property type="match status" value="1"/>
</dbReference>
<dbReference type="NCBIfam" id="NF006879">
    <property type="entry name" value="PRK09375.1-4"/>
    <property type="match status" value="1"/>
</dbReference>
<dbReference type="PANTHER" id="PTHR30573:SF0">
    <property type="entry name" value="QUINOLINATE SYNTHASE, CHLOROPLASTIC"/>
    <property type="match status" value="1"/>
</dbReference>
<dbReference type="PANTHER" id="PTHR30573">
    <property type="entry name" value="QUINOLINATE SYNTHETASE A"/>
    <property type="match status" value="1"/>
</dbReference>
<dbReference type="Pfam" id="PF02445">
    <property type="entry name" value="NadA"/>
    <property type="match status" value="1"/>
</dbReference>
<dbReference type="SUPFAM" id="SSF142754">
    <property type="entry name" value="NadA-like"/>
    <property type="match status" value="1"/>
</dbReference>
<name>NADA_CLOK1</name>
<sequence>MDDLFLVNEINRLKIERDACILAHNYQLPEVQDIADIVGDSLALSRAAAETTNKVIVFCGVKFMAESAKILSPDKTVLIPSKYAGCPLADSITKEQLEMEKKKHPEAEVICYVNSSAEVKAVSDVSCTSSNAVKVVQNSKSNKILFVPDENLAGYVAEQIPDKEIIPWAGHCITHARITVDDVIKAQEEHPEAEMLVHPEVSEEIRENADFVGSTSAIINYAKNSDSKEFIIGTEIGVLHKMKKDSPEKQFYLLSPRLVCENMKMTRLVDVYNSLMNMQYEVFVPENVRIKALGSLEKMISIE</sequence>
<keyword id="KW-0004">4Fe-4S</keyword>
<keyword id="KW-0963">Cytoplasm</keyword>
<keyword id="KW-0408">Iron</keyword>
<keyword id="KW-0411">Iron-sulfur</keyword>
<keyword id="KW-0479">Metal-binding</keyword>
<keyword id="KW-0662">Pyridine nucleotide biosynthesis</keyword>
<keyword id="KW-0808">Transferase</keyword>
<accession>B9DZP5</accession>
<reference key="1">
    <citation type="submission" date="2005-09" db="EMBL/GenBank/DDBJ databases">
        <title>Complete genome sequence of Clostridium kluyveri and comparative genomics of Clostridia species.</title>
        <authorList>
            <person name="Inui M."/>
            <person name="Nonaka H."/>
            <person name="Shinoda Y."/>
            <person name="Ikenaga Y."/>
            <person name="Abe M."/>
            <person name="Naito K."/>
            <person name="Vertes A.A."/>
            <person name="Yukawa H."/>
        </authorList>
    </citation>
    <scope>NUCLEOTIDE SEQUENCE [LARGE SCALE GENOMIC DNA]</scope>
    <source>
        <strain>NBRC 12016</strain>
    </source>
</reference>
<evidence type="ECO:0000255" key="1">
    <source>
        <dbReference type="HAMAP-Rule" id="MF_00568"/>
    </source>
</evidence>
<organism>
    <name type="scientific">Clostridium kluyveri (strain NBRC 12016)</name>
    <dbReference type="NCBI Taxonomy" id="583346"/>
    <lineage>
        <taxon>Bacteria</taxon>
        <taxon>Bacillati</taxon>
        <taxon>Bacillota</taxon>
        <taxon>Clostridia</taxon>
        <taxon>Eubacteriales</taxon>
        <taxon>Clostridiaceae</taxon>
        <taxon>Clostridium</taxon>
    </lineage>
</organism>